<feature type="chain" id="PRO_0000447331" description="Multidrug efflux system permease protein Rv1217c">
    <location>
        <begin position="1"/>
        <end position="548"/>
    </location>
</feature>
<feature type="transmembrane region" description="Helical" evidence="1">
    <location>
        <begin position="39"/>
        <end position="59"/>
    </location>
</feature>
<feature type="transmembrane region" description="Helical" evidence="1">
    <location>
        <begin position="99"/>
        <end position="119"/>
    </location>
</feature>
<feature type="transmembrane region" description="Helical" evidence="1">
    <location>
        <begin position="148"/>
        <end position="168"/>
    </location>
</feature>
<feature type="transmembrane region" description="Helical" evidence="1">
    <location>
        <begin position="178"/>
        <end position="198"/>
    </location>
</feature>
<feature type="transmembrane region" description="Helical" evidence="1">
    <location>
        <begin position="210"/>
        <end position="230"/>
    </location>
</feature>
<feature type="transmembrane region" description="Helical" evidence="1">
    <location>
        <begin position="253"/>
        <end position="273"/>
    </location>
</feature>
<feature type="transmembrane region" description="Helical" evidence="1">
    <location>
        <begin position="313"/>
        <end position="333"/>
    </location>
</feature>
<feature type="transmembrane region" description="Helical" evidence="1">
    <location>
        <begin position="359"/>
        <end position="379"/>
    </location>
</feature>
<feature type="transmembrane region" description="Helical" evidence="1">
    <location>
        <begin position="410"/>
        <end position="430"/>
    </location>
</feature>
<feature type="transmembrane region" description="Helical" evidence="1">
    <location>
        <begin position="450"/>
        <end position="470"/>
    </location>
</feature>
<feature type="transmembrane region" description="Helical" evidence="1">
    <location>
        <begin position="477"/>
        <end position="497"/>
    </location>
</feature>
<feature type="transmembrane region" description="Helical" evidence="1">
    <location>
        <begin position="521"/>
        <end position="541"/>
    </location>
</feature>
<feature type="turn" evidence="7">
    <location>
        <begin position="22"/>
        <end position="25"/>
    </location>
</feature>
<feature type="helix" evidence="7">
    <location>
        <begin position="26"/>
        <end position="36"/>
    </location>
</feature>
<feature type="turn" evidence="7">
    <location>
        <begin position="37"/>
        <end position="39"/>
    </location>
</feature>
<feature type="helix" evidence="7">
    <location>
        <begin position="40"/>
        <end position="46"/>
    </location>
</feature>
<feature type="turn" evidence="7">
    <location>
        <begin position="47"/>
        <end position="55"/>
    </location>
</feature>
<feature type="helix" evidence="7">
    <location>
        <begin position="56"/>
        <end position="63"/>
    </location>
</feature>
<feature type="helix" evidence="7">
    <location>
        <begin position="67"/>
        <end position="77"/>
    </location>
</feature>
<feature type="helix" evidence="7">
    <location>
        <begin position="81"/>
        <end position="87"/>
    </location>
</feature>
<feature type="helix" evidence="7">
    <location>
        <begin position="95"/>
        <end position="99"/>
    </location>
</feature>
<feature type="helix" evidence="7">
    <location>
        <begin position="102"/>
        <end position="105"/>
    </location>
</feature>
<feature type="helix" evidence="7">
    <location>
        <begin position="106"/>
        <end position="121"/>
    </location>
</feature>
<feature type="strand" evidence="7">
    <location>
        <begin position="122"/>
        <end position="125"/>
    </location>
</feature>
<feature type="turn" evidence="7">
    <location>
        <begin position="126"/>
        <end position="129"/>
    </location>
</feature>
<feature type="helix" evidence="7">
    <location>
        <begin position="130"/>
        <end position="133"/>
    </location>
</feature>
<feature type="turn" evidence="8">
    <location>
        <begin position="134"/>
        <end position="136"/>
    </location>
</feature>
<feature type="helix" evidence="7">
    <location>
        <begin position="143"/>
        <end position="168"/>
    </location>
</feature>
<feature type="strand" evidence="7">
    <location>
        <begin position="170"/>
        <end position="172"/>
    </location>
</feature>
<feature type="helix" evidence="7">
    <location>
        <begin position="174"/>
        <end position="198"/>
    </location>
</feature>
<feature type="helix" evidence="7">
    <location>
        <begin position="205"/>
        <end position="228"/>
    </location>
</feature>
<feature type="strand" evidence="7">
    <location>
        <begin position="229"/>
        <end position="232"/>
    </location>
</feature>
<feature type="helix" evidence="7">
    <location>
        <begin position="233"/>
        <end position="236"/>
    </location>
</feature>
<feature type="helix" evidence="7">
    <location>
        <begin position="238"/>
        <end position="241"/>
    </location>
</feature>
<feature type="turn" evidence="7">
    <location>
        <begin position="242"/>
        <end position="244"/>
    </location>
</feature>
<feature type="helix" evidence="7">
    <location>
        <begin position="253"/>
        <end position="255"/>
    </location>
</feature>
<feature type="helix" evidence="7">
    <location>
        <begin position="256"/>
        <end position="275"/>
    </location>
</feature>
<feature type="turn" evidence="8">
    <location>
        <begin position="294"/>
        <end position="296"/>
    </location>
</feature>
<feature type="strand" evidence="9">
    <location>
        <begin position="297"/>
        <end position="299"/>
    </location>
</feature>
<feature type="helix" evidence="7">
    <location>
        <begin position="302"/>
        <end position="336"/>
    </location>
</feature>
<feature type="turn" evidence="7">
    <location>
        <begin position="344"/>
        <end position="346"/>
    </location>
</feature>
<feature type="helix" evidence="7">
    <location>
        <begin position="347"/>
        <end position="350"/>
    </location>
</feature>
<feature type="helix" evidence="7">
    <location>
        <begin position="356"/>
        <end position="388"/>
    </location>
</feature>
<feature type="helix" evidence="7">
    <location>
        <begin position="392"/>
        <end position="396"/>
    </location>
</feature>
<feature type="strand" evidence="9">
    <location>
        <begin position="397"/>
        <end position="399"/>
    </location>
</feature>
<feature type="turn" evidence="7">
    <location>
        <begin position="402"/>
        <end position="409"/>
    </location>
</feature>
<feature type="helix" evidence="7">
    <location>
        <begin position="410"/>
        <end position="436"/>
    </location>
</feature>
<feature type="helix" evidence="7">
    <location>
        <begin position="442"/>
        <end position="451"/>
    </location>
</feature>
<feature type="helix" evidence="7">
    <location>
        <begin position="454"/>
        <end position="458"/>
    </location>
</feature>
<feature type="turn" evidence="7">
    <location>
        <begin position="459"/>
        <end position="461"/>
    </location>
</feature>
<feature type="helix" evidence="7">
    <location>
        <begin position="462"/>
        <end position="467"/>
    </location>
</feature>
<feature type="turn" evidence="7">
    <location>
        <begin position="468"/>
        <end position="470"/>
    </location>
</feature>
<feature type="helix" evidence="7">
    <location>
        <begin position="472"/>
        <end position="474"/>
    </location>
</feature>
<feature type="helix" evidence="7">
    <location>
        <begin position="477"/>
        <end position="493"/>
    </location>
</feature>
<feature type="strand" evidence="7">
    <location>
        <begin position="499"/>
        <end position="501"/>
    </location>
</feature>
<feature type="strand" evidence="9">
    <location>
        <begin position="504"/>
        <end position="506"/>
    </location>
</feature>
<feature type="strand" evidence="7">
    <location>
        <begin position="514"/>
        <end position="516"/>
    </location>
</feature>
<feature type="helix" evidence="7">
    <location>
        <begin position="521"/>
        <end position="539"/>
    </location>
</feature>
<feature type="turn" evidence="7">
    <location>
        <begin position="540"/>
        <end position="543"/>
    </location>
</feature>
<protein>
    <recommendedName>
        <fullName evidence="4">Multidrug efflux system permease protein Rv1217c</fullName>
    </recommendedName>
</protein>
<proteinExistence type="evidence at protein level"/>
<reference key="1">
    <citation type="journal article" date="1998" name="Nature">
        <title>Deciphering the biology of Mycobacterium tuberculosis from the complete genome sequence.</title>
        <authorList>
            <person name="Cole S.T."/>
            <person name="Brosch R."/>
            <person name="Parkhill J."/>
            <person name="Garnier T."/>
            <person name="Churcher C.M."/>
            <person name="Harris D.E."/>
            <person name="Gordon S.V."/>
            <person name="Eiglmeier K."/>
            <person name="Gas S."/>
            <person name="Barry C.E. III"/>
            <person name="Tekaia F."/>
            <person name="Badcock K."/>
            <person name="Basham D."/>
            <person name="Brown D."/>
            <person name="Chillingworth T."/>
            <person name="Connor R."/>
            <person name="Davies R.M."/>
            <person name="Devlin K."/>
            <person name="Feltwell T."/>
            <person name="Gentles S."/>
            <person name="Hamlin N."/>
            <person name="Holroyd S."/>
            <person name="Hornsby T."/>
            <person name="Jagels K."/>
            <person name="Krogh A."/>
            <person name="McLean J."/>
            <person name="Moule S."/>
            <person name="Murphy L.D."/>
            <person name="Oliver S."/>
            <person name="Osborne J."/>
            <person name="Quail M.A."/>
            <person name="Rajandream M.A."/>
            <person name="Rogers J."/>
            <person name="Rutter S."/>
            <person name="Seeger K."/>
            <person name="Skelton S."/>
            <person name="Squares S."/>
            <person name="Squares R."/>
            <person name="Sulston J.E."/>
            <person name="Taylor K."/>
            <person name="Whitehead S."/>
            <person name="Barrell B.G."/>
        </authorList>
    </citation>
    <scope>NUCLEOTIDE SEQUENCE [LARGE SCALE GENOMIC DNA]</scope>
    <source>
        <strain>ATCC 25618 / H37Rv</strain>
    </source>
</reference>
<reference key="2">
    <citation type="journal article" date="2000" name="FEMS Microbiol. Rev.">
        <title>The ATP binding cassette (ABC) transport systems of Mycobacterium tuberculosis.</title>
        <authorList>
            <person name="Braibant M."/>
            <person name="Gilot P."/>
            <person name="Content J."/>
        </authorList>
    </citation>
    <scope>SUBUNIT</scope>
</reference>
<reference key="3">
    <citation type="journal article" date="2011" name="Mol. Cell. Proteomics">
        <title>Proteogenomic analysis of Mycobacterium tuberculosis by high resolution mass spectrometry.</title>
        <authorList>
            <person name="Kelkar D.S."/>
            <person name="Kumar D."/>
            <person name="Kumar P."/>
            <person name="Balakrishnan L."/>
            <person name="Muthusamy B."/>
            <person name="Yadav A.K."/>
            <person name="Shrivastava P."/>
            <person name="Marimuthu A."/>
            <person name="Anand S."/>
            <person name="Sundaram H."/>
            <person name="Kingsbury R."/>
            <person name="Harsha H.C."/>
            <person name="Nair B."/>
            <person name="Prasad T.S."/>
            <person name="Chauhan D.S."/>
            <person name="Katoch K."/>
            <person name="Katoch V.M."/>
            <person name="Kumar P."/>
            <person name="Chaerkady R."/>
            <person name="Ramachandran S."/>
            <person name="Dash D."/>
            <person name="Pandey A."/>
        </authorList>
    </citation>
    <scope>IDENTIFICATION BY MASS SPECTROMETRY [LARGE SCALE ANALYSIS]</scope>
    <source>
        <strain>ATCC 25618 / H37Rv</strain>
    </source>
</reference>
<reference key="4">
    <citation type="journal article" date="2013" name="Curr. Microbiol.">
        <title>The expression of ABC efflux pump, Rv1217c-Rv1218c, and its association with multidrug resistance of Mycobacterium tuberculosis in China.</title>
        <authorList>
            <person name="Wang K."/>
            <person name="Pei H."/>
            <person name="Huang B."/>
            <person name="Zhu X."/>
            <person name="Zhang J."/>
            <person name="Zhou B."/>
            <person name="Zhu L."/>
            <person name="Zhang Y."/>
            <person name="Zhou F.F."/>
        </authorList>
    </citation>
    <scope>FUNCTION</scope>
    <scope>INDUCTION</scope>
</reference>
<reference key="5">
    <citation type="journal article" date="2014" name="Protein Sci.">
        <title>Crystal structure of the transcriptional regulator Rv1219c of Mycobacterium tuberculosis.</title>
        <authorList>
            <person name="Kumar N."/>
            <person name="Radhakrishnan A."/>
            <person name="Wright C.C."/>
            <person name="Chou T.H."/>
            <person name="Lei H.T."/>
            <person name="Bolla J.R."/>
            <person name="Tringides M.L."/>
            <person name="Rajashankar K.R."/>
            <person name="Su C.C."/>
            <person name="Purdy G.E."/>
            <person name="Yu E.W."/>
        </authorList>
    </citation>
    <scope>INDUCTION</scope>
    <source>
        <strain>H37Rv</strain>
    </source>
</reference>
<dbReference type="EMBL" id="AL123456">
    <property type="protein sequence ID" value="CCP43973.1"/>
    <property type="molecule type" value="Genomic_DNA"/>
</dbReference>
<dbReference type="RefSeq" id="NP_215733.1">
    <property type="nucleotide sequence ID" value="NC_000962.3"/>
</dbReference>
<dbReference type="RefSeq" id="WP_003898775.1">
    <property type="nucleotide sequence ID" value="NZ_NVQJ01000039.1"/>
</dbReference>
<dbReference type="PDB" id="8K1M">
    <property type="method" value="EM"/>
    <property type="resolution" value="2.90 A"/>
    <property type="chains" value="B=1-548"/>
</dbReference>
<dbReference type="PDB" id="8K1N">
    <property type="method" value="EM"/>
    <property type="resolution" value="3.00 A"/>
    <property type="chains" value="C=1-548"/>
</dbReference>
<dbReference type="PDB" id="8K1O">
    <property type="method" value="EM"/>
    <property type="resolution" value="2.90 A"/>
    <property type="chains" value="A=1-548"/>
</dbReference>
<dbReference type="PDB" id="8K1P">
    <property type="method" value="EM"/>
    <property type="resolution" value="3.40 A"/>
    <property type="chains" value="A=1-548"/>
</dbReference>
<dbReference type="PDBsum" id="8K1M"/>
<dbReference type="PDBsum" id="8K1N"/>
<dbReference type="PDBsum" id="8K1O"/>
<dbReference type="PDBsum" id="8K1P"/>
<dbReference type="EMDB" id="EMD-36795"/>
<dbReference type="EMDB" id="EMD-36796"/>
<dbReference type="EMDB" id="EMD-36797"/>
<dbReference type="EMDB" id="EMD-36798"/>
<dbReference type="SMR" id="O05318"/>
<dbReference type="STRING" id="83332.Rv1217c"/>
<dbReference type="PaxDb" id="83332-Rv1217c"/>
<dbReference type="DNASU" id="888401"/>
<dbReference type="GeneID" id="888401"/>
<dbReference type="KEGG" id="mtu:Rv1217c"/>
<dbReference type="KEGG" id="mtv:RVBD_1217c"/>
<dbReference type="PATRIC" id="fig|83332.111.peg.1360"/>
<dbReference type="TubercuList" id="Rv1217c"/>
<dbReference type="eggNOG" id="COG3559">
    <property type="taxonomic scope" value="Bacteria"/>
</dbReference>
<dbReference type="InParanoid" id="O05318"/>
<dbReference type="OrthoDB" id="2014935at2"/>
<dbReference type="PhylomeDB" id="O05318"/>
<dbReference type="Proteomes" id="UP000001584">
    <property type="component" value="Chromosome"/>
</dbReference>
<dbReference type="GO" id="GO:0005886">
    <property type="term" value="C:plasma membrane"/>
    <property type="evidence" value="ECO:0007669"/>
    <property type="project" value="UniProtKB-SubCell"/>
</dbReference>
<dbReference type="GO" id="GO:0046677">
    <property type="term" value="P:response to antibiotic"/>
    <property type="evidence" value="ECO:0007669"/>
    <property type="project" value="UniProtKB-KW"/>
</dbReference>
<comment type="function">
    <text evidence="2 4">Probably part of the ABC transporter complex Rv1217c-Rv1218c involved in the resistance to a wide range of structurally unrelated drugs (PubMed:23143285). Probably responsible for the translocation of the substrate across the membrane (Probable).</text>
</comment>
<comment type="subunit">
    <text evidence="5">The complex is probably composed of two ATP-binding proteins (Rv1218c) and a transmembrane protein (Rv1217c).</text>
</comment>
<comment type="subcellular location">
    <subcellularLocation>
        <location evidence="4">Cell inner membrane</location>
        <topology evidence="1">Multi-pass membrane protein</topology>
    </subcellularLocation>
</comment>
<comment type="induction">
    <text evidence="2 3">Transcriptionally regulated by RaaS (Rv1219c) (PubMed:24424575). Expression increases in multidrug-resistant clinical strains (MDR-TB) compared to drug-susceptible strains (PubMed:23143285).</text>
</comment>
<evidence type="ECO:0000255" key="1"/>
<evidence type="ECO:0000269" key="2">
    <source>
    </source>
</evidence>
<evidence type="ECO:0000269" key="3">
    <source>
    </source>
</evidence>
<evidence type="ECO:0000305" key="4"/>
<evidence type="ECO:0000305" key="5">
    <source>
    </source>
</evidence>
<evidence type="ECO:0000312" key="6">
    <source>
        <dbReference type="EMBL" id="CCP43973.1"/>
    </source>
</evidence>
<evidence type="ECO:0007829" key="7">
    <source>
        <dbReference type="PDB" id="8K1M"/>
    </source>
</evidence>
<evidence type="ECO:0007829" key="8">
    <source>
        <dbReference type="PDB" id="8K1N"/>
    </source>
</evidence>
<evidence type="ECO:0007829" key="9">
    <source>
        <dbReference type="PDB" id="8K1O"/>
    </source>
</evidence>
<sequence length="548" mass="56650">MSSTVIDRARPAGHRAPHRGSGFTGTLGLLRLYLRRDRVSLPLWVLLLSVPLATVYIASVETVYPDRSARAAAAAAIMASPAQRALYGPVYNDSLGAVGIWKAGMFHTLIAVAVILTVIRHTRADEESGRAELIDSTVVGRYANLTGALLLSFGASIATGAIGALGLLATDVAPAGSVAFGVALAASGMVFTAVAAVAAQLSPSARFTRAVAFAVLGTAFALRAIGDAGSGTLSWCSPLGWSLQVRPYAGERWWVLLLSLATAAVLTVLAYRLRAGRDVGAGLIAERPGAGTAGPMLSEPFGLAWRLNRGSLLLWTVGLCLYGLVMGSVVHGIGDQLGDNTAVRDIVTRMGGTGALEQAFLALAFTMIGMVAAAFAVSLTLRLHQEETGLRAETLLAGAVSRTHWLASHLAMALAGSAVATLISGVAAGLAYGMTVGDVGGKLPTVVGTAAVQLPAVWLLSAVTVGLFGLAPRFTPVAWGVLVGFIALYLLGSLAGFPQMLLNLEPFAHIPRVGGGDFTAVPLLWLLAIDAALITLGAMAFRRRDVRC</sequence>
<organism>
    <name type="scientific">Mycobacterium tuberculosis (strain ATCC 25618 / H37Rv)</name>
    <dbReference type="NCBI Taxonomy" id="83332"/>
    <lineage>
        <taxon>Bacteria</taxon>
        <taxon>Bacillati</taxon>
        <taxon>Actinomycetota</taxon>
        <taxon>Actinomycetes</taxon>
        <taxon>Mycobacteriales</taxon>
        <taxon>Mycobacteriaceae</taxon>
        <taxon>Mycobacterium</taxon>
        <taxon>Mycobacterium tuberculosis complex</taxon>
    </lineage>
</organism>
<gene>
    <name evidence="6" type="ordered locus">Rv1217c</name>
</gene>
<keyword id="KW-0002">3D-structure</keyword>
<keyword id="KW-0046">Antibiotic resistance</keyword>
<keyword id="KW-0997">Cell inner membrane</keyword>
<keyword id="KW-1003">Cell membrane</keyword>
<keyword id="KW-0472">Membrane</keyword>
<keyword id="KW-1185">Reference proteome</keyword>
<keyword id="KW-0812">Transmembrane</keyword>
<keyword id="KW-1133">Transmembrane helix</keyword>
<name>MEPRM_MYCTU</name>
<accession>O05318</accession>
<accession>F2GFX1</accession>
<accession>I6X0P9</accession>
<accession>Q7D8L2</accession>